<organism>
    <name type="scientific">Synechococcus sp. (strain WH7803)</name>
    <dbReference type="NCBI Taxonomy" id="32051"/>
    <lineage>
        <taxon>Bacteria</taxon>
        <taxon>Bacillati</taxon>
        <taxon>Cyanobacteriota</taxon>
        <taxon>Cyanophyceae</taxon>
        <taxon>Synechococcales</taxon>
        <taxon>Synechococcaceae</taxon>
        <taxon>Synechococcus</taxon>
    </lineage>
</organism>
<protein>
    <recommendedName>
        <fullName evidence="1">ATP-dependent Clp protease ATP-binding subunit ClpX</fullName>
    </recommendedName>
</protein>
<name>CLPX_SYNPW</name>
<proteinExistence type="inferred from homology"/>
<feature type="chain" id="PRO_1000024690" description="ATP-dependent Clp protease ATP-binding subunit ClpX">
    <location>
        <begin position="1"/>
        <end position="451"/>
    </location>
</feature>
<feature type="domain" description="ClpX-type ZB" evidence="2">
    <location>
        <begin position="1"/>
        <end position="51"/>
    </location>
</feature>
<feature type="region of interest" description="Disordered" evidence="3">
    <location>
        <begin position="50"/>
        <end position="80"/>
    </location>
</feature>
<feature type="binding site" evidence="2">
    <location>
        <position position="10"/>
    </location>
    <ligand>
        <name>Zn(2+)</name>
        <dbReference type="ChEBI" id="CHEBI:29105"/>
    </ligand>
</feature>
<feature type="binding site" evidence="2">
    <location>
        <position position="13"/>
    </location>
    <ligand>
        <name>Zn(2+)</name>
        <dbReference type="ChEBI" id="CHEBI:29105"/>
    </ligand>
</feature>
<feature type="binding site" evidence="2">
    <location>
        <position position="32"/>
    </location>
    <ligand>
        <name>Zn(2+)</name>
        <dbReference type="ChEBI" id="CHEBI:29105"/>
    </ligand>
</feature>
<feature type="binding site" evidence="2">
    <location>
        <position position="35"/>
    </location>
    <ligand>
        <name>Zn(2+)</name>
        <dbReference type="ChEBI" id="CHEBI:29105"/>
    </ligand>
</feature>
<feature type="binding site" evidence="1">
    <location>
        <begin position="144"/>
        <end position="151"/>
    </location>
    <ligand>
        <name>ATP</name>
        <dbReference type="ChEBI" id="CHEBI:30616"/>
    </ligand>
</feature>
<gene>
    <name evidence="1" type="primary">clpX</name>
    <name type="ordered locus">SynWH7803_0064</name>
</gene>
<evidence type="ECO:0000255" key="1">
    <source>
        <dbReference type="HAMAP-Rule" id="MF_00175"/>
    </source>
</evidence>
<evidence type="ECO:0000255" key="2">
    <source>
        <dbReference type="PROSITE-ProRule" id="PRU01250"/>
    </source>
</evidence>
<evidence type="ECO:0000256" key="3">
    <source>
        <dbReference type="SAM" id="MobiDB-lite"/>
    </source>
</evidence>
<dbReference type="EMBL" id="CT971583">
    <property type="protein sequence ID" value="CAK22490.1"/>
    <property type="molecule type" value="Genomic_DNA"/>
</dbReference>
<dbReference type="SMR" id="A5GHS5"/>
<dbReference type="STRING" id="32051.SynWH7803_0064"/>
<dbReference type="KEGG" id="syx:SynWH7803_0064"/>
<dbReference type="eggNOG" id="COG1219">
    <property type="taxonomic scope" value="Bacteria"/>
</dbReference>
<dbReference type="HOGENOM" id="CLU_014218_8_2_3"/>
<dbReference type="OrthoDB" id="9804062at2"/>
<dbReference type="Proteomes" id="UP000001566">
    <property type="component" value="Chromosome"/>
</dbReference>
<dbReference type="GO" id="GO:0009376">
    <property type="term" value="C:HslUV protease complex"/>
    <property type="evidence" value="ECO:0007669"/>
    <property type="project" value="TreeGrafter"/>
</dbReference>
<dbReference type="GO" id="GO:0005524">
    <property type="term" value="F:ATP binding"/>
    <property type="evidence" value="ECO:0007669"/>
    <property type="project" value="UniProtKB-UniRule"/>
</dbReference>
<dbReference type="GO" id="GO:0016887">
    <property type="term" value="F:ATP hydrolysis activity"/>
    <property type="evidence" value="ECO:0007669"/>
    <property type="project" value="InterPro"/>
</dbReference>
<dbReference type="GO" id="GO:0140662">
    <property type="term" value="F:ATP-dependent protein folding chaperone"/>
    <property type="evidence" value="ECO:0007669"/>
    <property type="project" value="InterPro"/>
</dbReference>
<dbReference type="GO" id="GO:0046983">
    <property type="term" value="F:protein dimerization activity"/>
    <property type="evidence" value="ECO:0007669"/>
    <property type="project" value="InterPro"/>
</dbReference>
<dbReference type="GO" id="GO:0051082">
    <property type="term" value="F:unfolded protein binding"/>
    <property type="evidence" value="ECO:0007669"/>
    <property type="project" value="UniProtKB-UniRule"/>
</dbReference>
<dbReference type="GO" id="GO:0008270">
    <property type="term" value="F:zinc ion binding"/>
    <property type="evidence" value="ECO:0007669"/>
    <property type="project" value="InterPro"/>
</dbReference>
<dbReference type="GO" id="GO:0051301">
    <property type="term" value="P:cell division"/>
    <property type="evidence" value="ECO:0007669"/>
    <property type="project" value="TreeGrafter"/>
</dbReference>
<dbReference type="GO" id="GO:0051603">
    <property type="term" value="P:proteolysis involved in protein catabolic process"/>
    <property type="evidence" value="ECO:0007669"/>
    <property type="project" value="TreeGrafter"/>
</dbReference>
<dbReference type="CDD" id="cd19497">
    <property type="entry name" value="RecA-like_ClpX"/>
    <property type="match status" value="1"/>
</dbReference>
<dbReference type="FunFam" id="1.10.8.60:FF:000002">
    <property type="entry name" value="ATP-dependent Clp protease ATP-binding subunit ClpX"/>
    <property type="match status" value="1"/>
</dbReference>
<dbReference type="FunFam" id="3.40.50.300:FF:000005">
    <property type="entry name" value="ATP-dependent Clp protease ATP-binding subunit ClpX"/>
    <property type="match status" value="1"/>
</dbReference>
<dbReference type="Gene3D" id="1.10.8.60">
    <property type="match status" value="1"/>
</dbReference>
<dbReference type="Gene3D" id="6.20.220.10">
    <property type="entry name" value="ClpX chaperone, C4-type zinc finger domain"/>
    <property type="match status" value="1"/>
</dbReference>
<dbReference type="Gene3D" id="3.40.50.300">
    <property type="entry name" value="P-loop containing nucleotide triphosphate hydrolases"/>
    <property type="match status" value="1"/>
</dbReference>
<dbReference type="HAMAP" id="MF_00175">
    <property type="entry name" value="ClpX"/>
    <property type="match status" value="1"/>
</dbReference>
<dbReference type="InterPro" id="IPR003593">
    <property type="entry name" value="AAA+_ATPase"/>
</dbReference>
<dbReference type="InterPro" id="IPR050052">
    <property type="entry name" value="ATP-dep_Clp_protease_ClpX"/>
</dbReference>
<dbReference type="InterPro" id="IPR003959">
    <property type="entry name" value="ATPase_AAA_core"/>
</dbReference>
<dbReference type="InterPro" id="IPR019489">
    <property type="entry name" value="Clp_ATPase_C"/>
</dbReference>
<dbReference type="InterPro" id="IPR004487">
    <property type="entry name" value="Clp_protease_ATP-bd_su_ClpX"/>
</dbReference>
<dbReference type="InterPro" id="IPR046425">
    <property type="entry name" value="ClpX_bact"/>
</dbReference>
<dbReference type="InterPro" id="IPR027417">
    <property type="entry name" value="P-loop_NTPase"/>
</dbReference>
<dbReference type="InterPro" id="IPR010603">
    <property type="entry name" value="Znf_CppX_C4"/>
</dbReference>
<dbReference type="InterPro" id="IPR038366">
    <property type="entry name" value="Znf_CppX_C4_sf"/>
</dbReference>
<dbReference type="NCBIfam" id="TIGR00382">
    <property type="entry name" value="clpX"/>
    <property type="match status" value="1"/>
</dbReference>
<dbReference type="NCBIfam" id="NF003745">
    <property type="entry name" value="PRK05342.1"/>
    <property type="match status" value="1"/>
</dbReference>
<dbReference type="PANTHER" id="PTHR48102:SF7">
    <property type="entry name" value="ATP-DEPENDENT CLP PROTEASE ATP-BINDING SUBUNIT CLPX-LIKE, MITOCHONDRIAL"/>
    <property type="match status" value="1"/>
</dbReference>
<dbReference type="PANTHER" id="PTHR48102">
    <property type="entry name" value="ATP-DEPENDENT CLP PROTEASE ATP-BINDING SUBUNIT CLPX-LIKE, MITOCHONDRIAL-RELATED"/>
    <property type="match status" value="1"/>
</dbReference>
<dbReference type="Pfam" id="PF07724">
    <property type="entry name" value="AAA_2"/>
    <property type="match status" value="1"/>
</dbReference>
<dbReference type="Pfam" id="PF10431">
    <property type="entry name" value="ClpB_D2-small"/>
    <property type="match status" value="1"/>
</dbReference>
<dbReference type="Pfam" id="PF06689">
    <property type="entry name" value="zf-C4_ClpX"/>
    <property type="match status" value="1"/>
</dbReference>
<dbReference type="SMART" id="SM00382">
    <property type="entry name" value="AAA"/>
    <property type="match status" value="1"/>
</dbReference>
<dbReference type="SMART" id="SM01086">
    <property type="entry name" value="ClpB_D2-small"/>
    <property type="match status" value="1"/>
</dbReference>
<dbReference type="SMART" id="SM00994">
    <property type="entry name" value="zf-C4_ClpX"/>
    <property type="match status" value="1"/>
</dbReference>
<dbReference type="SUPFAM" id="SSF57716">
    <property type="entry name" value="Glucocorticoid receptor-like (DNA-binding domain)"/>
    <property type="match status" value="1"/>
</dbReference>
<dbReference type="SUPFAM" id="SSF52540">
    <property type="entry name" value="P-loop containing nucleoside triphosphate hydrolases"/>
    <property type="match status" value="1"/>
</dbReference>
<dbReference type="PROSITE" id="PS51902">
    <property type="entry name" value="CLPX_ZB"/>
    <property type="match status" value="1"/>
</dbReference>
<accession>A5GHS5</accession>
<keyword id="KW-0067">ATP-binding</keyword>
<keyword id="KW-0143">Chaperone</keyword>
<keyword id="KW-0479">Metal-binding</keyword>
<keyword id="KW-0547">Nucleotide-binding</keyword>
<keyword id="KW-1185">Reference proteome</keyword>
<keyword id="KW-0862">Zinc</keyword>
<comment type="function">
    <text evidence="1">ATP-dependent specificity component of the Clp protease. It directs the protease to specific substrates. Can perform chaperone functions in the absence of ClpP.</text>
</comment>
<comment type="subunit">
    <text evidence="1">Component of the ClpX-ClpP complex. Forms a hexameric ring that, in the presence of ATP, binds to fourteen ClpP subunits assembled into a disk-like structure with a central cavity, resembling the structure of eukaryotic proteasomes.</text>
</comment>
<comment type="similarity">
    <text evidence="1">Belongs to the ClpX chaperone family.</text>
</comment>
<reference key="1">
    <citation type="submission" date="2006-05" db="EMBL/GenBank/DDBJ databases">
        <authorList>
            <consortium name="Genoscope"/>
        </authorList>
    </citation>
    <scope>NUCLEOTIDE SEQUENCE [LARGE SCALE GENOMIC DNA]</scope>
    <source>
        <strain>WH7803</strain>
    </source>
</reference>
<sequence length="451" mass="49353">MAKFDAHLKCSFCGKSQEQVRKLIAGPGVYICDECIDLCNEILDEELIDSQGGSRQGAEPSRKAGAAQARKSTKPAPTLASIPKPQDIKAFLDQQVVGQEAAKKVMSVAVYNHYKRLAWQGDGKGETEETATRLHKSNILLIGPTGCGKTLLAQTLAEMLDVPFAVADATTLTEAGYVGEDVENILLRLLQKADMDVDLAQRGIIYIDEIDKIARKSENPSITRDVSGEGVQQALLKMLEGTVANVPPQGGRKHPYQDCIQIDTSQILFICGGAFVGLDDVVQKRMGRNAIGFMPTEGRGRGKATRDLQAAQVLRHLEPDDLVRYGLIPEFIGRMPVSAVLEPLDEHALESILTEPRDALVKQFRTLLSMDNVQLEFEPSAIEAIAQEAHRRKTGARALRGIVEELMLDLMYELPSRKDASSFTITRAMVEEHTGGKVLPLPGSERQQESA</sequence>